<reference key="1">
    <citation type="journal article" date="2004" name="Nat. Genet.">
        <title>Complete sequencing and characterization of 21,243 full-length human cDNAs.</title>
        <authorList>
            <person name="Ota T."/>
            <person name="Suzuki Y."/>
            <person name="Nishikawa T."/>
            <person name="Otsuki T."/>
            <person name="Sugiyama T."/>
            <person name="Irie R."/>
            <person name="Wakamatsu A."/>
            <person name="Hayashi K."/>
            <person name="Sato H."/>
            <person name="Nagai K."/>
            <person name="Kimura K."/>
            <person name="Makita H."/>
            <person name="Sekine M."/>
            <person name="Obayashi M."/>
            <person name="Nishi T."/>
            <person name="Shibahara T."/>
            <person name="Tanaka T."/>
            <person name="Ishii S."/>
            <person name="Yamamoto J."/>
            <person name="Saito K."/>
            <person name="Kawai Y."/>
            <person name="Isono Y."/>
            <person name="Nakamura Y."/>
            <person name="Nagahari K."/>
            <person name="Murakami K."/>
            <person name="Yasuda T."/>
            <person name="Iwayanagi T."/>
            <person name="Wagatsuma M."/>
            <person name="Shiratori A."/>
            <person name="Sudo H."/>
            <person name="Hosoiri T."/>
            <person name="Kaku Y."/>
            <person name="Kodaira H."/>
            <person name="Kondo H."/>
            <person name="Sugawara M."/>
            <person name="Takahashi M."/>
            <person name="Kanda K."/>
            <person name="Yokoi T."/>
            <person name="Furuya T."/>
            <person name="Kikkawa E."/>
            <person name="Omura Y."/>
            <person name="Abe K."/>
            <person name="Kamihara K."/>
            <person name="Katsuta N."/>
            <person name="Sato K."/>
            <person name="Tanikawa M."/>
            <person name="Yamazaki M."/>
            <person name="Ninomiya K."/>
            <person name="Ishibashi T."/>
            <person name="Yamashita H."/>
            <person name="Murakawa K."/>
            <person name="Fujimori K."/>
            <person name="Tanai H."/>
            <person name="Kimata M."/>
            <person name="Watanabe M."/>
            <person name="Hiraoka S."/>
            <person name="Chiba Y."/>
            <person name="Ishida S."/>
            <person name="Ono Y."/>
            <person name="Takiguchi S."/>
            <person name="Watanabe S."/>
            <person name="Yosida M."/>
            <person name="Hotuta T."/>
            <person name="Kusano J."/>
            <person name="Kanehori K."/>
            <person name="Takahashi-Fujii A."/>
            <person name="Hara H."/>
            <person name="Tanase T.-O."/>
            <person name="Nomura Y."/>
            <person name="Togiya S."/>
            <person name="Komai F."/>
            <person name="Hara R."/>
            <person name="Takeuchi K."/>
            <person name="Arita M."/>
            <person name="Imose N."/>
            <person name="Musashino K."/>
            <person name="Yuuki H."/>
            <person name="Oshima A."/>
            <person name="Sasaki N."/>
            <person name="Aotsuka S."/>
            <person name="Yoshikawa Y."/>
            <person name="Matsunawa H."/>
            <person name="Ichihara T."/>
            <person name="Shiohata N."/>
            <person name="Sano S."/>
            <person name="Moriya S."/>
            <person name="Momiyama H."/>
            <person name="Satoh N."/>
            <person name="Takami S."/>
            <person name="Terashima Y."/>
            <person name="Suzuki O."/>
            <person name="Nakagawa S."/>
            <person name="Senoh A."/>
            <person name="Mizoguchi H."/>
            <person name="Goto Y."/>
            <person name="Shimizu F."/>
            <person name="Wakebe H."/>
            <person name="Hishigaki H."/>
            <person name="Watanabe T."/>
            <person name="Sugiyama A."/>
            <person name="Takemoto M."/>
            <person name="Kawakami B."/>
            <person name="Yamazaki M."/>
            <person name="Watanabe K."/>
            <person name="Kumagai A."/>
            <person name="Itakura S."/>
            <person name="Fukuzumi Y."/>
            <person name="Fujimori Y."/>
            <person name="Komiyama M."/>
            <person name="Tashiro H."/>
            <person name="Tanigami A."/>
            <person name="Fujiwara T."/>
            <person name="Ono T."/>
            <person name="Yamada K."/>
            <person name="Fujii Y."/>
            <person name="Ozaki K."/>
            <person name="Hirao M."/>
            <person name="Ohmori Y."/>
            <person name="Kawabata A."/>
            <person name="Hikiji T."/>
            <person name="Kobatake N."/>
            <person name="Inagaki H."/>
            <person name="Ikema Y."/>
            <person name="Okamoto S."/>
            <person name="Okitani R."/>
            <person name="Kawakami T."/>
            <person name="Noguchi S."/>
            <person name="Itoh T."/>
            <person name="Shigeta K."/>
            <person name="Senba T."/>
            <person name="Matsumura K."/>
            <person name="Nakajima Y."/>
            <person name="Mizuno T."/>
            <person name="Morinaga M."/>
            <person name="Sasaki M."/>
            <person name="Togashi T."/>
            <person name="Oyama M."/>
            <person name="Hata H."/>
            <person name="Watanabe M."/>
            <person name="Komatsu T."/>
            <person name="Mizushima-Sugano J."/>
            <person name="Satoh T."/>
            <person name="Shirai Y."/>
            <person name="Takahashi Y."/>
            <person name="Nakagawa K."/>
            <person name="Okumura K."/>
            <person name="Nagase T."/>
            <person name="Nomura N."/>
            <person name="Kikuchi H."/>
            <person name="Masuho Y."/>
            <person name="Yamashita R."/>
            <person name="Nakai K."/>
            <person name="Yada T."/>
            <person name="Nakamura Y."/>
            <person name="Ohara O."/>
            <person name="Isogai T."/>
            <person name="Sugano S."/>
        </authorList>
    </citation>
    <scope>NUCLEOTIDE SEQUENCE [LARGE SCALE MRNA]</scope>
    <scope>VARIANTS GLY-123 AND ILE-348</scope>
</reference>
<reference key="2">
    <citation type="journal article" date="2006" name="Nature">
        <title>The finished DNA sequence of human chromosome 12.</title>
        <authorList>
            <person name="Scherer S.E."/>
            <person name="Muzny D.M."/>
            <person name="Buhay C.J."/>
            <person name="Chen R."/>
            <person name="Cree A."/>
            <person name="Ding Y."/>
            <person name="Dugan-Rocha S."/>
            <person name="Gill R."/>
            <person name="Gunaratne P."/>
            <person name="Harris R.A."/>
            <person name="Hawes A.C."/>
            <person name="Hernandez J."/>
            <person name="Hodgson A.V."/>
            <person name="Hume J."/>
            <person name="Jackson A."/>
            <person name="Khan Z.M."/>
            <person name="Kovar-Smith C."/>
            <person name="Lewis L.R."/>
            <person name="Lozado R.J."/>
            <person name="Metzker M.L."/>
            <person name="Milosavljevic A."/>
            <person name="Miner G.R."/>
            <person name="Montgomery K.T."/>
            <person name="Morgan M.B."/>
            <person name="Nazareth L.V."/>
            <person name="Scott G."/>
            <person name="Sodergren E."/>
            <person name="Song X.-Z."/>
            <person name="Steffen D."/>
            <person name="Lovering R.C."/>
            <person name="Wheeler D.A."/>
            <person name="Worley K.C."/>
            <person name="Yuan Y."/>
            <person name="Zhang Z."/>
            <person name="Adams C.Q."/>
            <person name="Ansari-Lari M.A."/>
            <person name="Ayele M."/>
            <person name="Brown M.J."/>
            <person name="Chen G."/>
            <person name="Chen Z."/>
            <person name="Clerc-Blankenburg K.P."/>
            <person name="Davis C."/>
            <person name="Delgado O."/>
            <person name="Dinh H.H."/>
            <person name="Draper H."/>
            <person name="Gonzalez-Garay M.L."/>
            <person name="Havlak P."/>
            <person name="Jackson L.R."/>
            <person name="Jacob L.S."/>
            <person name="Kelly S.H."/>
            <person name="Li L."/>
            <person name="Li Z."/>
            <person name="Liu J."/>
            <person name="Liu W."/>
            <person name="Lu J."/>
            <person name="Maheshwari M."/>
            <person name="Nguyen B.-V."/>
            <person name="Okwuonu G.O."/>
            <person name="Pasternak S."/>
            <person name="Perez L.M."/>
            <person name="Plopper F.J.H."/>
            <person name="Santibanez J."/>
            <person name="Shen H."/>
            <person name="Tabor P.E."/>
            <person name="Verduzco D."/>
            <person name="Waldron L."/>
            <person name="Wang Q."/>
            <person name="Williams G.A."/>
            <person name="Zhang J."/>
            <person name="Zhou J."/>
            <person name="Allen C.C."/>
            <person name="Amin A.G."/>
            <person name="Anyalebechi V."/>
            <person name="Bailey M."/>
            <person name="Barbaria J.A."/>
            <person name="Bimage K.E."/>
            <person name="Bryant N.P."/>
            <person name="Burch P.E."/>
            <person name="Burkett C.E."/>
            <person name="Burrell K.L."/>
            <person name="Calderon E."/>
            <person name="Cardenas V."/>
            <person name="Carter K."/>
            <person name="Casias K."/>
            <person name="Cavazos I."/>
            <person name="Cavazos S.R."/>
            <person name="Ceasar H."/>
            <person name="Chacko J."/>
            <person name="Chan S.N."/>
            <person name="Chavez D."/>
            <person name="Christopoulos C."/>
            <person name="Chu J."/>
            <person name="Cockrell R."/>
            <person name="Cox C.D."/>
            <person name="Dang M."/>
            <person name="Dathorne S.R."/>
            <person name="David R."/>
            <person name="Davis C.M."/>
            <person name="Davy-Carroll L."/>
            <person name="Deshazo D.R."/>
            <person name="Donlin J.E."/>
            <person name="D'Souza L."/>
            <person name="Eaves K.A."/>
            <person name="Egan A."/>
            <person name="Emery-Cohen A.J."/>
            <person name="Escotto M."/>
            <person name="Flagg N."/>
            <person name="Forbes L.D."/>
            <person name="Gabisi A.M."/>
            <person name="Garza M."/>
            <person name="Hamilton C."/>
            <person name="Henderson N."/>
            <person name="Hernandez O."/>
            <person name="Hines S."/>
            <person name="Hogues M.E."/>
            <person name="Huang M."/>
            <person name="Idlebird D.G."/>
            <person name="Johnson R."/>
            <person name="Jolivet A."/>
            <person name="Jones S."/>
            <person name="Kagan R."/>
            <person name="King L.M."/>
            <person name="Leal B."/>
            <person name="Lebow H."/>
            <person name="Lee S."/>
            <person name="LeVan J.M."/>
            <person name="Lewis L.C."/>
            <person name="London P."/>
            <person name="Lorensuhewa L.M."/>
            <person name="Loulseged H."/>
            <person name="Lovett D.A."/>
            <person name="Lucier A."/>
            <person name="Lucier R.L."/>
            <person name="Ma J."/>
            <person name="Madu R.C."/>
            <person name="Mapua P."/>
            <person name="Martindale A.D."/>
            <person name="Martinez E."/>
            <person name="Massey E."/>
            <person name="Mawhiney S."/>
            <person name="Meador M.G."/>
            <person name="Mendez S."/>
            <person name="Mercado C."/>
            <person name="Mercado I.C."/>
            <person name="Merritt C.E."/>
            <person name="Miner Z.L."/>
            <person name="Minja E."/>
            <person name="Mitchell T."/>
            <person name="Mohabbat F."/>
            <person name="Mohabbat K."/>
            <person name="Montgomery B."/>
            <person name="Moore N."/>
            <person name="Morris S."/>
            <person name="Munidasa M."/>
            <person name="Ngo R.N."/>
            <person name="Nguyen N.B."/>
            <person name="Nickerson E."/>
            <person name="Nwaokelemeh O.O."/>
            <person name="Nwokenkwo S."/>
            <person name="Obregon M."/>
            <person name="Oguh M."/>
            <person name="Oragunye N."/>
            <person name="Oviedo R.J."/>
            <person name="Parish B.J."/>
            <person name="Parker D.N."/>
            <person name="Parrish J."/>
            <person name="Parks K.L."/>
            <person name="Paul H.A."/>
            <person name="Payton B.A."/>
            <person name="Perez A."/>
            <person name="Perrin W."/>
            <person name="Pickens A."/>
            <person name="Primus E.L."/>
            <person name="Pu L.-L."/>
            <person name="Puazo M."/>
            <person name="Quiles M.M."/>
            <person name="Quiroz J.B."/>
            <person name="Rabata D."/>
            <person name="Reeves K."/>
            <person name="Ruiz S.J."/>
            <person name="Shao H."/>
            <person name="Sisson I."/>
            <person name="Sonaike T."/>
            <person name="Sorelle R.P."/>
            <person name="Sutton A.E."/>
            <person name="Svatek A.F."/>
            <person name="Svetz L.A."/>
            <person name="Tamerisa K.S."/>
            <person name="Taylor T.R."/>
            <person name="Teague B."/>
            <person name="Thomas N."/>
            <person name="Thorn R.D."/>
            <person name="Trejos Z.Y."/>
            <person name="Trevino B.K."/>
            <person name="Ukegbu O.N."/>
            <person name="Urban J.B."/>
            <person name="Vasquez L.I."/>
            <person name="Vera V.A."/>
            <person name="Villasana D.M."/>
            <person name="Wang L."/>
            <person name="Ward-Moore S."/>
            <person name="Warren J.T."/>
            <person name="Wei X."/>
            <person name="White F."/>
            <person name="Williamson A.L."/>
            <person name="Wleczyk R."/>
            <person name="Wooden H.S."/>
            <person name="Wooden S.H."/>
            <person name="Yen J."/>
            <person name="Yoon L."/>
            <person name="Yoon V."/>
            <person name="Zorrilla S.E."/>
            <person name="Nelson D."/>
            <person name="Kucherlapati R."/>
            <person name="Weinstock G."/>
            <person name="Gibbs R.A."/>
        </authorList>
    </citation>
    <scope>NUCLEOTIDE SEQUENCE [LARGE SCALE GENOMIC DNA]</scope>
</reference>
<reference key="3">
    <citation type="submission" date="2005-09" db="EMBL/GenBank/DDBJ databases">
        <authorList>
            <person name="Mural R.J."/>
            <person name="Istrail S."/>
            <person name="Sutton G.G."/>
            <person name="Florea L."/>
            <person name="Halpern A.L."/>
            <person name="Mobarry C.M."/>
            <person name="Lippert R."/>
            <person name="Walenz B."/>
            <person name="Shatkay H."/>
            <person name="Dew I."/>
            <person name="Miller J.R."/>
            <person name="Flanigan M.J."/>
            <person name="Edwards N.J."/>
            <person name="Bolanos R."/>
            <person name="Fasulo D."/>
            <person name="Halldorsson B.V."/>
            <person name="Hannenhalli S."/>
            <person name="Turner R."/>
            <person name="Yooseph S."/>
            <person name="Lu F."/>
            <person name="Nusskern D.R."/>
            <person name="Shue B.C."/>
            <person name="Zheng X.H."/>
            <person name="Zhong F."/>
            <person name="Delcher A.L."/>
            <person name="Huson D.H."/>
            <person name="Kravitz S.A."/>
            <person name="Mouchard L."/>
            <person name="Reinert K."/>
            <person name="Remington K.A."/>
            <person name="Clark A.G."/>
            <person name="Waterman M.S."/>
            <person name="Eichler E.E."/>
            <person name="Adams M.D."/>
            <person name="Hunkapiller M.W."/>
            <person name="Myers E.W."/>
            <person name="Venter J.C."/>
        </authorList>
    </citation>
    <scope>NUCLEOTIDE SEQUENCE [LARGE SCALE GENOMIC DNA]</scope>
    <scope>VARIANT ILE-348</scope>
</reference>
<reference key="4">
    <citation type="journal article" date="2004" name="Genome Res.">
        <title>The status, quality, and expansion of the NIH full-length cDNA project: the Mammalian Gene Collection (MGC).</title>
        <authorList>
            <consortium name="The MGC Project Team"/>
        </authorList>
    </citation>
    <scope>NUCLEOTIDE SEQUENCE [LARGE SCALE MRNA]</scope>
    <scope>VARIANTS GLY-123; GLU-234; LEU-334 AND ILE-348</scope>
    <source>
        <tissue>Brain</tissue>
    </source>
</reference>
<keyword id="KW-1185">Reference proteome</keyword>
<comment type="interaction">
    <interactant intactId="EBI-6658203">
        <id>Q86YD7</id>
    </interactant>
    <interactant intactId="EBI-11096309">
        <id>Q9NYB9-2</id>
        <label>ABI2</label>
    </interactant>
    <organismsDiffer>false</organismsDiffer>
    <experiments>3</experiments>
</comment>
<comment type="interaction">
    <interactant intactId="EBI-6658203">
        <id>Q86YD7</id>
    </interactant>
    <interactant intactId="EBI-2880652">
        <id>Q08043</id>
        <label>ACTN3</label>
    </interactant>
    <organismsDiffer>false</organismsDiffer>
    <experiments>3</experiments>
</comment>
<comment type="interaction">
    <interactant intactId="EBI-6658203">
        <id>Q86YD7</id>
    </interactant>
    <interactant intactId="EBI-11745576">
        <id>Q6PJH3</id>
        <label>AKAP9</label>
    </interactant>
    <organismsDiffer>false</organismsDiffer>
    <experiments>3</experiments>
</comment>
<comment type="interaction">
    <interactant intactId="EBI-6658203">
        <id>Q86YD7</id>
    </interactant>
    <interactant intactId="EBI-746752">
        <id>Q9Y2J4</id>
        <label>AMOTL2</label>
    </interactant>
    <organismsDiffer>false</organismsDiffer>
    <experiments>3</experiments>
</comment>
<comment type="interaction">
    <interactant intactId="EBI-6658203">
        <id>Q86YD7</id>
    </interactant>
    <interactant intactId="EBI-5661893">
        <id>Q86SG2</id>
        <label>ANKRD23</label>
    </interactant>
    <organismsDiffer>false</organismsDiffer>
    <experiments>3</experiments>
</comment>
<comment type="interaction">
    <interactant intactId="EBI-6658203">
        <id>Q86YD7</id>
    </interactant>
    <interactant intactId="EBI-17439331">
        <id>Q8N6D5</id>
        <label>ANKRD29</label>
    </interactant>
    <organismsDiffer>false</organismsDiffer>
    <experiments>3</experiments>
</comment>
<comment type="interaction">
    <interactant intactId="EBI-6658203">
        <id>Q86YD7</id>
    </interactant>
    <interactant intactId="EBI-297683">
        <id>Q96CW1</id>
        <label>AP2M1</label>
    </interactant>
    <organismsDiffer>false</organismsDiffer>
    <experiments>5</experiments>
</comment>
<comment type="interaction">
    <interactant intactId="EBI-6658203">
        <id>Q86YD7</id>
    </interactant>
    <interactant intactId="EBI-3447299">
        <id>O43307</id>
        <label>ARHGEF9</label>
    </interactant>
    <organismsDiffer>false</organismsDiffer>
    <experiments>3</experiments>
</comment>
<comment type="interaction">
    <interactant intactId="EBI-6658203">
        <id>Q86YD7</id>
    </interactant>
    <interactant intactId="EBI-2875665">
        <id>Q96B67</id>
        <label>ARRDC3</label>
    </interactant>
    <organismsDiffer>false</organismsDiffer>
    <experiments>3</experiments>
</comment>
<comment type="interaction">
    <interactant intactId="EBI-6658203">
        <id>Q86YD7</id>
    </interactant>
    <interactant intactId="EBI-744695">
        <id>Q8N9N5</id>
        <label>BANP</label>
    </interactant>
    <organismsDiffer>false</organismsDiffer>
    <experiments>3</experiments>
</comment>
<comment type="interaction">
    <interactant intactId="EBI-6658203">
        <id>Q86YD7</id>
    </interactant>
    <interactant intactId="EBI-11524452">
        <id>Q8N9N5-2</id>
        <label>BANP</label>
    </interactant>
    <organismsDiffer>false</organismsDiffer>
    <experiments>3</experiments>
</comment>
<comment type="interaction">
    <interactant intactId="EBI-6658203">
        <id>Q86YD7</id>
    </interactant>
    <interactant intactId="EBI-702093">
        <id>P56945</id>
        <label>BCAR1</label>
    </interactant>
    <organismsDiffer>false</organismsDiffer>
    <experiments>3</experiments>
</comment>
<comment type="interaction">
    <interactant intactId="EBI-6658203">
        <id>Q86YD7</id>
    </interactant>
    <interactant intactId="EBI-742722">
        <id>Q9BUH8</id>
        <label>BEGAIN</label>
    </interactant>
    <organismsDiffer>false</organismsDiffer>
    <experiments>3</experiments>
</comment>
<comment type="interaction">
    <interactant intactId="EBI-6658203">
        <id>Q86YD7</id>
    </interactant>
    <interactant intactId="EBI-2548012">
        <id>Q9H2G9</id>
        <label>BLZF1</label>
    </interactant>
    <organismsDiffer>false</organismsDiffer>
    <experiments>3</experiments>
</comment>
<comment type="interaction">
    <interactant intactId="EBI-6658203">
        <id>Q86YD7</id>
    </interactant>
    <interactant intactId="EBI-723869">
        <id>O60885</id>
        <label>BRD4</label>
    </interactant>
    <organismsDiffer>false</organismsDiffer>
    <experiments>7</experiments>
</comment>
<comment type="interaction">
    <interactant intactId="EBI-6658203">
        <id>Q86YD7</id>
    </interactant>
    <interactant intactId="EBI-10179719">
        <id>A2RRN7</id>
        <label>CADPS</label>
    </interactant>
    <organismsDiffer>false</organismsDiffer>
    <experiments>3</experiments>
</comment>
<comment type="interaction">
    <interactant intactId="EBI-6658203">
        <id>Q86YD7</id>
    </interactant>
    <interactant intactId="EBI-739580">
        <id>Q13137</id>
        <label>CALCOCO2</label>
    </interactant>
    <organismsDiffer>false</organismsDiffer>
    <experiments>7</experiments>
</comment>
<comment type="interaction">
    <interactant intactId="EBI-6658203">
        <id>Q86YD7</id>
    </interactant>
    <interactant intactId="EBI-11530605">
        <id>Q9H257-2</id>
        <label>CARD9</label>
    </interactant>
    <organismsDiffer>false</organismsDiffer>
    <experiments>3</experiments>
</comment>
<comment type="interaction">
    <interactant intactId="EBI-6658203">
        <id>Q86YD7</id>
    </interactant>
    <interactant intactId="EBI-10961312">
        <id>Q8IYE1</id>
        <label>CCDC13</label>
    </interactant>
    <organismsDiffer>false</organismsDiffer>
    <experiments>3</experiments>
</comment>
<comment type="interaction">
    <interactant intactId="EBI-6658203">
        <id>Q86YD7</id>
    </interactant>
    <interactant intactId="EBI-2808286">
        <id>Q2TAC2</id>
        <label>CCDC57</label>
    </interactant>
    <organismsDiffer>false</organismsDiffer>
    <experiments>3</experiments>
</comment>
<comment type="interaction">
    <interactant intactId="EBI-6658203">
        <id>Q86YD7</id>
    </interactant>
    <interactant intactId="EBI-10961624">
        <id>Q2TAC2-2</id>
        <label>CCDC57</label>
    </interactant>
    <organismsDiffer>false</organismsDiffer>
    <experiments>3</experiments>
</comment>
<comment type="interaction">
    <interactant intactId="EBI-6658203">
        <id>Q86YD7</id>
    </interactant>
    <interactant intactId="EBI-3904822">
        <id>P48745</id>
        <label>CCN3</label>
    </interactant>
    <organismsDiffer>false</organismsDiffer>
    <experiments>3</experiments>
</comment>
<comment type="interaction">
    <interactant intactId="EBI-6658203">
        <id>Q86YD7</id>
    </interactant>
    <interactant intactId="EBI-395261">
        <id>P24863</id>
        <label>CCNC</label>
    </interactant>
    <organismsDiffer>false</organismsDiffer>
    <experiments>3</experiments>
</comment>
<comment type="interaction">
    <interactant intactId="EBI-6658203">
        <id>Q86YD7</id>
    </interactant>
    <interactant intactId="EBI-12024864">
        <id>Q96S94-5</id>
        <label>CCNL2</label>
    </interactant>
    <organismsDiffer>false</organismsDiffer>
    <experiments>3</experiments>
</comment>
<comment type="interaction">
    <interactant intactId="EBI-6658203">
        <id>Q86YD7</id>
    </interactant>
    <interactant intactId="EBI-1181367">
        <id>Q01850</id>
        <label>CDR2</label>
    </interactant>
    <organismsDiffer>false</organismsDiffer>
    <experiments>3</experiments>
</comment>
<comment type="interaction">
    <interactant intactId="EBI-6658203">
        <id>Q86YD7</id>
    </interactant>
    <interactant intactId="EBI-747776">
        <id>Q53EZ4</id>
        <label>CEP55</label>
    </interactant>
    <organismsDiffer>false</organismsDiffer>
    <experiments>6</experiments>
</comment>
<comment type="interaction">
    <interactant intactId="EBI-6658203">
        <id>Q86YD7</id>
    </interactant>
    <interactant intactId="EBI-739624">
        <id>Q8NHQ1</id>
        <label>CEP70</label>
    </interactant>
    <organismsDiffer>false</organismsDiffer>
    <experiments>3</experiments>
</comment>
<comment type="interaction">
    <interactant intactId="EBI-6658203">
        <id>Q86YD7</id>
    </interactant>
    <interactant intactId="EBI-739498">
        <id>Q9P209</id>
        <label>CEP72</label>
    </interactant>
    <organismsDiffer>false</organismsDiffer>
    <experiments>3</experiments>
</comment>
<comment type="interaction">
    <interactant intactId="EBI-6658203">
        <id>Q86YD7</id>
    </interactant>
    <interactant intactId="EBI-742887">
        <id>Q8TAP6</id>
        <label>CEP76</label>
    </interactant>
    <organismsDiffer>false</organismsDiffer>
    <experiments>6</experiments>
</comment>
<comment type="interaction">
    <interactant intactId="EBI-6658203">
        <id>Q86YD7</id>
    </interactant>
    <interactant intactId="EBI-12593838">
        <id>Q6WN34-2</id>
        <label>CHRDL2</label>
    </interactant>
    <organismsDiffer>false</organismsDiffer>
    <experiments>3</experiments>
</comment>
<comment type="interaction">
    <interactant intactId="EBI-6658203">
        <id>Q86YD7</id>
    </interactant>
    <interactant intactId="EBI-3866319">
        <id>Q9Y2V7</id>
        <label>COG6</label>
    </interactant>
    <organismsDiffer>false</organismsDiffer>
    <experiments>5</experiments>
</comment>
<comment type="interaction">
    <interactant intactId="EBI-6658203">
        <id>Q86YD7</id>
    </interactant>
    <interactant intactId="EBI-3867333">
        <id>A8MQ03</id>
        <label>CYSRT1</label>
    </interactant>
    <organismsDiffer>false</organismsDiffer>
    <experiments>3</experiments>
</comment>
<comment type="interaction">
    <interactant intactId="EBI-6658203">
        <id>Q86YD7</id>
    </interactant>
    <interactant intactId="EBI-2340258">
        <id>Q8N9I9</id>
        <label>DTX3</label>
    </interactant>
    <organismsDiffer>false</organismsDiffer>
    <experiments>5</experiments>
</comment>
<comment type="interaction">
    <interactant intactId="EBI-6658203">
        <id>Q86YD7</id>
    </interactant>
    <interactant intactId="EBI-739789">
        <id>Q92997</id>
        <label>DVL3</label>
    </interactant>
    <organismsDiffer>false</organismsDiffer>
    <experiments>3</experiments>
</comment>
<comment type="interaction">
    <interactant intactId="EBI-6658203">
        <id>Q86YD7</id>
    </interactant>
    <interactant intactId="EBI-743414">
        <id>O95967</id>
        <label>EFEMP2</label>
    </interactant>
    <organismsDiffer>false</organismsDiffer>
    <experiments>3</experiments>
</comment>
<comment type="interaction">
    <interactant intactId="EBI-6658203">
        <id>Q86YD7</id>
    </interactant>
    <interactant intactId="EBI-744099">
        <id>Q9H0I2</id>
        <label>ENKD1</label>
    </interactant>
    <organismsDiffer>false</organismsDiffer>
    <experiments>3</experiments>
</comment>
<comment type="interaction">
    <interactant intactId="EBI-6658203">
        <id>Q86YD7</id>
    </interactant>
    <interactant intactId="EBI-371922">
        <id>Q96B26</id>
        <label>EXOSC8</label>
    </interactant>
    <organismsDiffer>false</organismsDiffer>
    <experiments>6</experiments>
</comment>
<comment type="interaction">
    <interactant intactId="EBI-6658203">
        <id>Q86YD7</id>
    </interactant>
    <interactant intactId="EBI-12958227">
        <id>Q86W67</id>
        <label>FAM228A</label>
    </interactant>
    <organismsDiffer>false</organismsDiffer>
    <experiments>3</experiments>
</comment>
<comment type="interaction">
    <interactant intactId="EBI-6658203">
        <id>Q86YD7</id>
    </interactant>
    <interactant intactId="EBI-741101">
        <id>Q13643</id>
        <label>FHL3</label>
    </interactant>
    <organismsDiffer>false</organismsDiffer>
    <experiments>7</experiments>
</comment>
<comment type="interaction">
    <interactant intactId="EBI-6658203">
        <id>Q86YD7</id>
    </interactant>
    <interactant intactId="EBI-10229248">
        <id>Q96C98</id>
        <label>FHL3</label>
    </interactant>
    <organismsDiffer>false</organismsDiffer>
    <experiments>3</experiments>
</comment>
<comment type="interaction">
    <interactant intactId="EBI-6658203">
        <id>Q86YD7</id>
    </interactant>
    <interactant intactId="EBI-11533409">
        <id>Q96Q35-2</id>
        <label>FLACC1</label>
    </interactant>
    <organismsDiffer>false</organismsDiffer>
    <experiments>3</experiments>
</comment>
<comment type="interaction">
    <interactant intactId="EBI-6658203">
        <id>Q86YD7</id>
    </interactant>
    <interactant intactId="EBI-603643">
        <id>O75955</id>
        <label>FLOT1</label>
    </interactant>
    <organismsDiffer>false</organismsDiffer>
    <experiments>3</experiments>
</comment>
<comment type="interaction">
    <interactant intactId="EBI-6658203">
        <id>Q86YD7</id>
    </interactant>
    <interactant intactId="EBI-2806743">
        <id>P53539</id>
        <label>FOSB</label>
    </interactant>
    <organismsDiffer>false</organismsDiffer>
    <experiments>3</experiments>
</comment>
<comment type="interaction">
    <interactant intactId="EBI-6658203">
        <id>Q86YD7</id>
    </interactant>
    <interactant intactId="EBI-5661036">
        <id>A1L4K1</id>
        <label>FSD2</label>
    </interactant>
    <organismsDiffer>false</organismsDiffer>
    <experiments>6</experiments>
</comment>
<comment type="interaction">
    <interactant intactId="EBI-6658203">
        <id>Q86YD7</id>
    </interactant>
    <interactant intactId="EBI-11022345">
        <id>P51114-2</id>
        <label>FXR1</label>
    </interactant>
    <organismsDiffer>false</organismsDiffer>
    <experiments>3</experiments>
</comment>
<comment type="interaction">
    <interactant intactId="EBI-6658203">
        <id>Q86YD7</id>
    </interactant>
    <interactant intactId="EBI-740459">
        <id>P51116</id>
        <label>FXR2</label>
    </interactant>
    <organismsDiffer>false</organismsDiffer>
    <experiments>3</experiments>
</comment>
<comment type="interaction">
    <interactant intactId="EBI-6658203">
        <id>Q86YD7</id>
    </interactant>
    <interactant intactId="EBI-10691738">
        <id>P06241-3</id>
        <label>FYN</label>
    </interactant>
    <organismsDiffer>false</organismsDiffer>
    <experiments>3</experiments>
</comment>
<comment type="interaction">
    <interactant intactId="EBI-6658203">
        <id>Q86YD7</id>
    </interactant>
    <interactant intactId="EBI-618165">
        <id>Q06547</id>
        <label>GABPB1</label>
    </interactant>
    <organismsDiffer>false</organismsDiffer>
    <experiments>3</experiments>
</comment>
<comment type="interaction">
    <interactant intactId="EBI-6658203">
        <id>Q86YD7</id>
    </interactant>
    <interactant intactId="EBI-17857617">
        <id>Q5JQS6</id>
        <label>GCSAML</label>
    </interactant>
    <organismsDiffer>false</organismsDiffer>
    <experiments>3</experiments>
</comment>
<comment type="interaction">
    <interactant intactId="EBI-6658203">
        <id>Q86YD7</id>
    </interactant>
    <interactant intactId="EBI-1104907">
        <id>Q3T906</id>
        <label>GNPTAB</label>
    </interactant>
    <organismsDiffer>false</organismsDiffer>
    <experiments>3</experiments>
</comment>
<comment type="interaction">
    <interactant intactId="EBI-6658203">
        <id>Q86YD7</id>
    </interactant>
    <interactant intactId="EBI-618309">
        <id>Q08379</id>
        <label>GOLGA2</label>
    </interactant>
    <organismsDiffer>false</organismsDiffer>
    <experiments>8</experiments>
</comment>
<comment type="interaction">
    <interactant intactId="EBI-6658203">
        <id>Q86YD7</id>
    </interactant>
    <interactant intactId="EBI-349832">
        <id>Q9HD26</id>
        <label>GOPC</label>
    </interactant>
    <organismsDiffer>false</organismsDiffer>
    <experiments>3</experiments>
</comment>
<comment type="interaction">
    <interactant intactId="EBI-6658203">
        <id>Q86YD7</id>
    </interactant>
    <interactant intactId="EBI-11519926">
        <id>Q6PI77</id>
        <label>GPRASP3</label>
    </interactant>
    <organismsDiffer>false</organismsDiffer>
    <experiments>3</experiments>
</comment>
<comment type="interaction">
    <interactant intactId="EBI-6658203">
        <id>Q86YD7</id>
    </interactant>
    <interactant intactId="EBI-10261098">
        <id>Q86YR5-3</id>
        <label>GPSM1</label>
    </interactant>
    <organismsDiffer>false</organismsDiffer>
    <experiments>3</experiments>
</comment>
<comment type="interaction">
    <interactant intactId="EBI-6658203">
        <id>Q86YD7</id>
    </interactant>
    <interactant intactId="EBI-717919">
        <id>Q4V328</id>
        <label>GRIPAP1</label>
    </interactant>
    <organismsDiffer>false</organismsDiffer>
    <experiments>3</experiments>
</comment>
<comment type="interaction">
    <interactant intactId="EBI-6658203">
        <id>Q86YD7</id>
    </interactant>
    <interactant intactId="EBI-13086076">
        <id>P61296-2</id>
        <label>HAND2</label>
    </interactant>
    <organismsDiffer>false</organismsDiffer>
    <experiments>3</experiments>
</comment>
<comment type="interaction">
    <interactant intactId="EBI-6658203">
        <id>Q86YD7</id>
    </interactant>
    <interactant intactId="EBI-2549423">
        <id>Q6NT76</id>
        <label>HMBOX1</label>
    </interactant>
    <organismsDiffer>false</organismsDiffer>
    <experiments>3</experiments>
</comment>
<comment type="interaction">
    <interactant intactId="EBI-6658203">
        <id>Q86YD7</id>
    </interactant>
    <interactant intactId="EBI-748420">
        <id>Q9NSC5</id>
        <label>HOMER3</label>
    </interactant>
    <organismsDiffer>false</organismsDiffer>
    <experiments>3</experiments>
</comment>
<comment type="interaction">
    <interactant intactId="EBI-6658203">
        <id>Q86YD7</id>
    </interactant>
    <interactant intactId="EBI-10961706">
        <id>Q96ED9-2</id>
        <label>HOOK2</label>
    </interactant>
    <organismsDiffer>false</organismsDiffer>
    <experiments>3</experiments>
</comment>
<comment type="interaction">
    <interactant intactId="EBI-6658203">
        <id>Q86YD7</id>
    </interactant>
    <interactant intactId="EBI-7116203">
        <id>O75031</id>
        <label>HSF2BP</label>
    </interactant>
    <organismsDiffer>false</organismsDiffer>
    <experiments>3</experiments>
</comment>
<comment type="interaction">
    <interactant intactId="EBI-6658203">
        <id>Q86YD7</id>
    </interactant>
    <interactant intactId="EBI-2557660">
        <id>Q9ULR0</id>
        <label>ISY1</label>
    </interactant>
    <organismsDiffer>false</organismsDiffer>
    <experiments>3</experiments>
</comment>
<comment type="interaction">
    <interactant intactId="EBI-6658203">
        <id>Q86YD7</id>
    </interactant>
    <interactant intactId="EBI-2556193">
        <id>Q63ZY3</id>
        <label>KANK2</label>
    </interactant>
    <organismsDiffer>false</organismsDiffer>
    <experiments>3</experiments>
</comment>
<comment type="interaction">
    <interactant intactId="EBI-6658203">
        <id>Q86YD7</id>
    </interactant>
    <interactant intactId="EBI-749265">
        <id>Q8N6L0</id>
        <label>KASH5</label>
    </interactant>
    <organismsDiffer>false</organismsDiffer>
    <experiments>3</experiments>
</comment>
<comment type="interaction">
    <interactant intactId="EBI-6658203">
        <id>Q86YD7</id>
    </interactant>
    <interactant intactId="EBI-14069005">
        <id>Q9BVG8-5</id>
        <label>KIFC3</label>
    </interactant>
    <organismsDiffer>false</organismsDiffer>
    <experiments>3</experiments>
</comment>
<comment type="interaction">
    <interactant intactId="EBI-6658203">
        <id>Q86YD7</id>
    </interactant>
    <interactant intactId="EBI-740929">
        <id>Q53G59</id>
        <label>KLHL12</label>
    </interactant>
    <organismsDiffer>false</organismsDiffer>
    <experiments>3</experiments>
</comment>
<comment type="interaction">
    <interactant intactId="EBI-6658203">
        <id>Q86YD7</id>
    </interactant>
    <interactant intactId="EBI-358297">
        <id>O00505</id>
        <label>KPNA3</label>
    </interactant>
    <organismsDiffer>false</organismsDiffer>
    <experiments>4</experiments>
</comment>
<comment type="interaction">
    <interactant intactId="EBI-6658203">
        <id>Q86YD7</id>
    </interactant>
    <interactant intactId="EBI-359923">
        <id>O60684</id>
        <label>KPNA6</label>
    </interactant>
    <organismsDiffer>false</organismsDiffer>
    <experiments>3</experiments>
</comment>
<comment type="interaction">
    <interactant intactId="EBI-6658203">
        <id>Q86YD7</id>
    </interactant>
    <interactant intactId="EBI-948001">
        <id>Q15323</id>
        <label>KRT31</label>
    </interactant>
    <organismsDiffer>false</organismsDiffer>
    <experiments>6</experiments>
</comment>
<comment type="interaction">
    <interactant intactId="EBI-6658203">
        <id>Q86YD7</id>
    </interactant>
    <interactant intactId="EBI-1047093">
        <id>O76011</id>
        <label>KRT34</label>
    </interactant>
    <organismsDiffer>false</organismsDiffer>
    <experiments>3</experiments>
</comment>
<comment type="interaction">
    <interactant intactId="EBI-6658203">
        <id>Q86YD7</id>
    </interactant>
    <interactant intactId="EBI-1047263">
        <id>O76015</id>
        <label>KRT38</label>
    </interactant>
    <organismsDiffer>false</organismsDiffer>
    <experiments>3</experiments>
</comment>
<comment type="interaction">
    <interactant intactId="EBI-6658203">
        <id>Q86YD7</id>
    </interactant>
    <interactant intactId="EBI-10171697">
        <id>Q6A162</id>
        <label>KRT40</label>
    </interactant>
    <organismsDiffer>false</organismsDiffer>
    <experiments>6</experiments>
</comment>
<comment type="interaction">
    <interactant intactId="EBI-6658203">
        <id>Q86YD7</id>
    </interactant>
    <interactant intactId="EBI-11959885">
        <id>Q07627</id>
        <label>KRTAP1-1</label>
    </interactant>
    <organismsDiffer>false</organismsDiffer>
    <experiments>3</experiments>
</comment>
<comment type="interaction">
    <interactant intactId="EBI-6658203">
        <id>Q86YD7</id>
    </interactant>
    <interactant intactId="EBI-10171774">
        <id>P60410</id>
        <label>KRTAP10-8</label>
    </interactant>
    <organismsDiffer>false</organismsDiffer>
    <experiments>3</experiments>
</comment>
<comment type="interaction">
    <interactant intactId="EBI-6658203">
        <id>Q86YD7</id>
    </interactant>
    <interactant intactId="EBI-740738">
        <id>O95751</id>
        <label>LDOC1</label>
    </interactant>
    <organismsDiffer>false</organismsDiffer>
    <experiments>6</experiments>
</comment>
<comment type="interaction">
    <interactant intactId="EBI-6658203">
        <id>Q86YD7</id>
    </interactant>
    <interactant intactId="EBI-10258746">
        <id>Q9UPM6</id>
        <label>LHX6</label>
    </interactant>
    <organismsDiffer>false</organismsDiffer>
    <experiments>3</experiments>
</comment>
<comment type="interaction">
    <interactant intactId="EBI-6658203">
        <id>Q86YD7</id>
    </interactant>
    <interactant intactId="EBI-12864460">
        <id>P48059-3</id>
        <label>LIMS1</label>
    </interactant>
    <organismsDiffer>false</organismsDiffer>
    <experiments>3</experiments>
</comment>
<comment type="interaction">
    <interactant intactId="EBI-6658203">
        <id>Q86YD7</id>
    </interactant>
    <interactant intactId="EBI-11959475">
        <id>P25791-3</id>
        <label>LMO2</label>
    </interactant>
    <organismsDiffer>false</organismsDiffer>
    <experiments>5</experiments>
</comment>
<comment type="interaction">
    <interactant intactId="EBI-6658203">
        <id>Q86YD7</id>
    </interactant>
    <interactant intactId="EBI-739832">
        <id>Q8TBB1</id>
        <label>LNX1</label>
    </interactant>
    <organismsDiffer>false</organismsDiffer>
    <experiments>3</experiments>
</comment>
<comment type="interaction">
    <interactant intactId="EBI-6658203">
        <id>Q86YD7</id>
    </interactant>
    <interactant intactId="EBI-18273118">
        <id>Q9P2M1</id>
        <label>LRP2BP</label>
    </interactant>
    <organismsDiffer>false</organismsDiffer>
    <experiments>3</experiments>
</comment>
<comment type="interaction">
    <interactant intactId="EBI-6658203">
        <id>Q86YD7</id>
    </interactant>
    <interactant intactId="EBI-1216080">
        <id>Q9Y250</id>
        <label>LZTS1</label>
    </interactant>
    <organismsDiffer>false</organismsDiffer>
    <experiments>3</experiments>
</comment>
<comment type="interaction">
    <interactant intactId="EBI-6658203">
        <id>Q86YD7</id>
    </interactant>
    <interactant intactId="EBI-741037">
        <id>Q9BRK4</id>
        <label>LZTS2</label>
    </interactant>
    <organismsDiffer>false</organismsDiffer>
    <experiments>3</experiments>
</comment>
<comment type="interaction">
    <interactant intactId="EBI-6658203">
        <id>Q86YD7</id>
    </interactant>
    <interactant intactId="EBI-742610">
        <id>Q9Y6D9</id>
        <label>MAD1L1</label>
    </interactant>
    <organismsDiffer>false</organismsDiffer>
    <experiments>3</experiments>
</comment>
<comment type="interaction">
    <interactant intactId="EBI-6658203">
        <id>Q86YD7</id>
    </interactant>
    <interactant intactId="EBI-724076">
        <id>Q99750</id>
        <label>MDFI</label>
    </interactant>
    <organismsDiffer>false</organismsDiffer>
    <experiments>3</experiments>
</comment>
<comment type="interaction">
    <interactant intactId="EBI-6658203">
        <id>Q86YD7</id>
    </interactant>
    <interactant intactId="EBI-18582591">
        <id>Q99687-3</id>
        <label>MEIS3</label>
    </interactant>
    <organismsDiffer>false</organismsDiffer>
    <experiments>3</experiments>
</comment>
<comment type="interaction">
    <interactant intactId="EBI-6658203">
        <id>Q86YD7</id>
    </interactant>
    <interactant intactId="EBI-10172526">
        <id>Q9UJV3-2</id>
        <label>MID2</label>
    </interactant>
    <organismsDiffer>false</organismsDiffer>
    <experiments>6</experiments>
</comment>
<comment type="interaction">
    <interactant intactId="EBI-6658203">
        <id>Q86YD7</id>
    </interactant>
    <interactant intactId="EBI-2548751">
        <id>Q8TD10</id>
        <label>MIPOL1</label>
    </interactant>
    <organismsDiffer>false</organismsDiffer>
    <experiments>3</experiments>
</comment>
<comment type="interaction">
    <interactant intactId="EBI-6658203">
        <id>Q86YD7</id>
    </interactant>
    <interactant intactId="EBI-744248">
        <id>P40692</id>
        <label>MLH1</label>
    </interactant>
    <organismsDiffer>false</organismsDiffer>
    <experiments>3</experiments>
</comment>
<comment type="interaction">
    <interactant intactId="EBI-6658203">
        <id>Q86YD7</id>
    </interactant>
    <interactant intactId="EBI-9675802">
        <id>Q6PF18</id>
        <label>MORN3</label>
    </interactant>
    <organismsDiffer>false</organismsDiffer>
    <experiments>3</experiments>
</comment>
<comment type="interaction">
    <interactant intactId="EBI-6658203">
        <id>Q86YD7</id>
    </interactant>
    <interactant intactId="EBI-11599933">
        <id>Q4VC12</id>
        <label>MSS51</label>
    </interactant>
    <organismsDiffer>false</organismsDiffer>
    <experiments>3</experiments>
</comment>
<comment type="interaction">
    <interactant intactId="EBI-6658203">
        <id>Q86YD7</id>
    </interactant>
    <interactant intactId="EBI-742948">
        <id>Q5JR59</id>
        <label>MTUS2</label>
    </interactant>
    <organismsDiffer>false</organismsDiffer>
    <experiments>3</experiments>
</comment>
<comment type="interaction">
    <interactant intactId="EBI-6658203">
        <id>Q86YD7</id>
    </interactant>
    <interactant intactId="EBI-11522433">
        <id>Q5JR59-3</id>
        <label>MTUS2</label>
    </interactant>
    <organismsDiffer>false</organismsDiffer>
    <experiments>3</experiments>
</comment>
<comment type="interaction">
    <interactant intactId="EBI-6658203">
        <id>Q86YD7</id>
    </interactant>
    <interactant intactId="EBI-3906629">
        <id>P15173</id>
        <label>MYOG</label>
    </interactant>
    <organismsDiffer>false</organismsDiffer>
    <experiments>3</experiments>
</comment>
<comment type="interaction">
    <interactant intactId="EBI-6658203">
        <id>Q86YD7</id>
    </interactant>
    <interactant intactId="EBI-1246238">
        <id>P17568</id>
        <label>NDUFB7</label>
    </interactant>
    <organismsDiffer>false</organismsDiffer>
    <experiments>3</experiments>
</comment>
<comment type="interaction">
    <interactant intactId="EBI-6658203">
        <id>Q86YD7</id>
    </interactant>
    <interactant intactId="EBI-22310682">
        <id>P0DPK4</id>
        <label>NOTCH2NLC</label>
    </interactant>
    <organismsDiffer>false</organismsDiffer>
    <experiments>3</experiments>
</comment>
<comment type="interaction">
    <interactant intactId="EBI-6658203">
        <id>Q86YD7</id>
    </interactant>
    <interactant intactId="EBI-355720">
        <id>O43809</id>
        <label>NUDT21</label>
    </interactant>
    <organismsDiffer>false</organismsDiffer>
    <experiments>3</experiments>
</comment>
<comment type="interaction">
    <interactant intactId="EBI-6658203">
        <id>Q86YD7</id>
    </interactant>
    <interactant intactId="EBI-3917713">
        <id>O14753</id>
        <label>OVOL1</label>
    </interactant>
    <organismsDiffer>false</organismsDiffer>
    <experiments>3</experiments>
</comment>
<comment type="interaction">
    <interactant intactId="EBI-6658203">
        <id>Q86YD7</id>
    </interactant>
    <interactant intactId="EBI-301611">
        <id>P40424</id>
        <label>PBX1</label>
    </interactant>
    <organismsDiffer>false</organismsDiffer>
    <experiments>3</experiments>
</comment>
<comment type="interaction">
    <interactant intactId="EBI-6658203">
        <id>Q86YD7</id>
    </interactant>
    <interactant intactId="EBI-348489">
        <id>P40425</id>
        <label>PBX2</label>
    </interactant>
    <organismsDiffer>false</organismsDiffer>
    <experiments>3</experiments>
</comment>
<comment type="interaction">
    <interactant intactId="EBI-6658203">
        <id>Q86YD7</id>
    </interactant>
    <interactant intactId="EBI-350517">
        <id>Q9NR12</id>
        <label>PDLIM7</label>
    </interactant>
    <organismsDiffer>false</organismsDiffer>
    <experiments>3</experiments>
</comment>
<comment type="interaction">
    <interactant intactId="EBI-6658203">
        <id>Q86YD7</id>
    </interactant>
    <interactant intactId="EBI-357275">
        <id>Q99471</id>
        <label>PFDN5</label>
    </interactant>
    <organismsDiffer>false</organismsDiffer>
    <experiments>3</experiments>
</comment>
<comment type="interaction">
    <interactant intactId="EBI-6658203">
        <id>Q86YD7</id>
    </interactant>
    <interactant intactId="EBI-79165">
        <id>Q9NRD5</id>
        <label>PICK1</label>
    </interactant>
    <organismsDiffer>false</organismsDiffer>
    <experiments>3</experiments>
</comment>
<comment type="interaction">
    <interactant intactId="EBI-6658203">
        <id>Q86YD7</id>
    </interactant>
    <interactant intactId="EBI-357318">
        <id>Q9NWS0</id>
        <label>PIH1D1</label>
    </interactant>
    <organismsDiffer>false</organismsDiffer>
    <experiments>5</experiments>
</comment>
<comment type="interaction">
    <interactant intactId="EBI-6658203">
        <id>Q86YD7</id>
    </interactant>
    <interactant intactId="EBI-2876622">
        <id>Q9UPG8</id>
        <label>PLAGL2</label>
    </interactant>
    <organismsDiffer>false</organismsDiffer>
    <experiments>3</experiments>
</comment>
<comment type="interaction">
    <interactant intactId="EBI-6658203">
        <id>Q86YD7</id>
    </interactant>
    <interactant intactId="EBI-11986735">
        <id>Q8WVV4-1</id>
        <label>POF1B</label>
    </interactant>
    <organismsDiffer>false</organismsDiffer>
    <experiments>3</experiments>
</comment>
<comment type="interaction">
    <interactant intactId="EBI-6658203">
        <id>Q86YD7</id>
    </interactant>
    <interactant intactId="EBI-1105153">
        <id>Q96KQ4</id>
        <label>PPP1R13B</label>
    </interactant>
    <organismsDiffer>false</organismsDiffer>
    <experiments>3</experiments>
</comment>
<comment type="interaction">
    <interactant intactId="EBI-6658203">
        <id>Q86YD7</id>
    </interactant>
    <interactant intactId="EBI-11320284">
        <id>Q9NQX0</id>
        <label>PRDM6</label>
    </interactant>
    <organismsDiffer>false</organismsDiffer>
    <experiments>3</experiments>
</comment>
<comment type="interaction">
    <interactant intactId="EBI-6658203">
        <id>Q86YD7</id>
    </interactant>
    <interactant intactId="EBI-2805516">
        <id>P31321</id>
        <label>PRKAR1B</label>
    </interactant>
    <organismsDiffer>false</organismsDiffer>
    <experiments>3</experiments>
</comment>
<comment type="interaction">
    <interactant intactId="EBI-6658203">
        <id>Q86YD7</id>
    </interactant>
    <interactant intactId="EBI-12845180">
        <id>Q6ZRT6</id>
        <label>PRR23B</label>
    </interactant>
    <organismsDiffer>false</organismsDiffer>
    <experiments>3</experiments>
</comment>
<comment type="interaction">
    <interactant intactId="EBI-6658203">
        <id>Q86YD7</id>
    </interactant>
    <interactant intactId="EBI-1050964">
        <id>O43586</id>
        <label>PSTPIP1</label>
    </interactant>
    <organismsDiffer>false</organismsDiffer>
    <experiments>6</experiments>
</comment>
<comment type="interaction">
    <interactant intactId="EBI-6658203">
        <id>Q86YD7</id>
    </interactant>
    <interactant intactId="EBI-1049676">
        <id>Q7L804</id>
        <label>RAB11FIP2</label>
    </interactant>
    <organismsDiffer>false</organismsDiffer>
    <experiments>3</experiments>
</comment>
<comment type="interaction">
    <interactant intactId="EBI-6658203">
        <id>Q86YD7</id>
    </interactant>
    <interactant intactId="EBI-447043">
        <id>Q15276</id>
        <label>RABEP1</label>
    </interactant>
    <organismsDiffer>false</organismsDiffer>
    <experiments>3</experiments>
</comment>
<comment type="interaction">
    <interactant intactId="EBI-6658203">
        <id>Q86YD7</id>
    </interactant>
    <interactant intactId="EBI-473821">
        <id>Q5RL73</id>
        <label>RBM48</label>
    </interactant>
    <organismsDiffer>false</organismsDiffer>
    <experiments>3</experiments>
</comment>
<comment type="interaction">
    <interactant intactId="EBI-6658203">
        <id>Q86YD7</id>
    </interactant>
    <interactant intactId="EBI-10829018">
        <id>Q04864-2</id>
        <label>REL</label>
    </interactant>
    <organismsDiffer>false</organismsDiffer>
    <experiments>3</experiments>
</comment>
<comment type="interaction">
    <interactant intactId="EBI-6658203">
        <id>Q86YD7</id>
    </interactant>
    <interactant intactId="EBI-1244971">
        <id>Q15669</id>
        <label>RHOH</label>
    </interactant>
    <organismsDiffer>false</organismsDiffer>
    <experiments>3</experiments>
</comment>
<comment type="interaction">
    <interactant intactId="EBI-6658203">
        <id>Q86YD7</id>
    </interactant>
    <interactant intactId="EBI-726876">
        <id>Q6NUQ1</id>
        <label>RINT1</label>
    </interactant>
    <organismsDiffer>false</organismsDiffer>
    <experiments>3</experiments>
</comment>
<comment type="interaction">
    <interactant intactId="EBI-6658203">
        <id>Q86YD7</id>
    </interactant>
    <interactant intactId="EBI-1378139">
        <id>Q9HAT0</id>
        <label>ROPN1</label>
    </interactant>
    <organismsDiffer>false</organismsDiffer>
    <experiments>3</experiments>
</comment>
<comment type="interaction">
    <interactant intactId="EBI-6658203">
        <id>Q86YD7</id>
    </interactant>
    <interactant intactId="EBI-12840198">
        <id>Q96P16-3</id>
        <label>RPRD1A</label>
    </interactant>
    <organismsDiffer>false</organismsDiffer>
    <experiments>3</experiments>
</comment>
<comment type="interaction">
    <interactant intactId="EBI-6658203">
        <id>Q86YD7</id>
    </interactant>
    <interactant intactId="EBI-19952306">
        <id>O14492-2</id>
        <label>SH2B2</label>
    </interactant>
    <organismsDiffer>false</organismsDiffer>
    <experiments>3</experiments>
</comment>
<comment type="interaction">
    <interactant intactId="EBI-6658203">
        <id>Q86YD7</id>
    </interactant>
    <interactant intactId="EBI-747107">
        <id>Q8IUQ4</id>
        <label>SIAH1</label>
    </interactant>
    <organismsDiffer>false</organismsDiffer>
    <experiments>3</experiments>
</comment>
<comment type="interaction">
    <interactant intactId="EBI-6658203">
        <id>Q86YD7</id>
    </interactant>
    <interactant intactId="EBI-347161">
        <id>P84022</id>
        <label>SMAD3</label>
    </interactant>
    <organismsDiffer>false</organismsDiffer>
    <experiments>3</experiments>
</comment>
<comment type="interaction">
    <interactant intactId="EBI-6658203">
        <id>Q86YD7</id>
    </interactant>
    <interactant intactId="EBI-358436">
        <id>Q12824-2</id>
        <label>SMARCB1</label>
    </interactant>
    <organismsDiffer>false</organismsDiffer>
    <experiments>3</experiments>
</comment>
<comment type="interaction">
    <interactant intactId="EBI-6658203">
        <id>Q86YD7</id>
    </interactant>
    <interactant intactId="EBI-632715">
        <id>Q13573</id>
        <label>SNW1</label>
    </interactant>
    <organismsDiffer>false</organismsDiffer>
    <experiments>3</experiments>
</comment>
<comment type="interaction">
    <interactant intactId="EBI-6658203">
        <id>Q86YD7</id>
    </interactant>
    <interactant intactId="EBI-5235340">
        <id>Q7Z699</id>
        <label>SPRED1</label>
    </interactant>
    <organismsDiffer>false</organismsDiffer>
    <experiments>3</experiments>
</comment>
<comment type="interaction">
    <interactant intactId="EBI-6658203">
        <id>Q86YD7</id>
    </interactant>
    <interactant intactId="EBI-745680">
        <id>Q96MF2</id>
        <label>STAC3</label>
    </interactant>
    <organismsDiffer>false</organismsDiffer>
    <experiments>6</experiments>
</comment>
<comment type="interaction">
    <interactant intactId="EBI-6658203">
        <id>Q86YD7</id>
    </interactant>
    <interactant intactId="EBI-714194">
        <id>Q93045</id>
        <label>STMN2</label>
    </interactant>
    <organismsDiffer>false</organismsDiffer>
    <experiments>3</experiments>
</comment>
<comment type="interaction">
    <interactant intactId="EBI-6658203">
        <id>Q86YD7</id>
    </interactant>
    <interactant intactId="EBI-714135">
        <id>O75558</id>
        <label>STX11</label>
    </interactant>
    <organismsDiffer>false</organismsDiffer>
    <experiments>3</experiments>
</comment>
<comment type="interaction">
    <interactant intactId="EBI-6658203">
        <id>Q86YD7</id>
    </interactant>
    <interactant intactId="EBI-529518">
        <id>Q86VP1</id>
        <label>TAX1BP1</label>
    </interactant>
    <organismsDiffer>false</organismsDiffer>
    <experiments>3</experiments>
</comment>
<comment type="interaction">
    <interactant intactId="EBI-6658203">
        <id>Q86YD7</id>
    </interactant>
    <interactant intactId="EBI-11139477">
        <id>Q96N21</id>
        <label>TEPSIN</label>
    </interactant>
    <organismsDiffer>false</organismsDiffer>
    <experiments>3</experiments>
</comment>
<comment type="interaction">
    <interactant intactId="EBI-6658203">
        <id>Q86YD7</id>
    </interactant>
    <interactant intactId="EBI-1105213">
        <id>Q9UBB9</id>
        <label>TFIP11</label>
    </interactant>
    <organismsDiffer>false</organismsDiffer>
    <experiments>3</experiments>
</comment>
<comment type="interaction">
    <interactant intactId="EBI-6658203">
        <id>Q86YD7</id>
    </interactant>
    <interactant intactId="EBI-11741437">
        <id>Q08117-2</id>
        <label>TLE5</label>
    </interactant>
    <organismsDiffer>false</organismsDiffer>
    <experiments>3</experiments>
</comment>
<comment type="interaction">
    <interactant intactId="EBI-6658203">
        <id>Q86YD7</id>
    </interactant>
    <interactant intactId="EBI-355744">
        <id>Q12933</id>
        <label>TRAF2</label>
    </interactant>
    <organismsDiffer>false</organismsDiffer>
    <experiments>6</experiments>
</comment>
<comment type="interaction">
    <interactant intactId="EBI-6658203">
        <id>Q86YD7</id>
    </interactant>
    <interactant intactId="EBI-492476">
        <id>Q96RU7</id>
        <label>TRIB3</label>
    </interactant>
    <organismsDiffer>false</organismsDiffer>
    <experiments>3</experiments>
</comment>
<comment type="interaction">
    <interactant intactId="EBI-6658203">
        <id>Q86YD7</id>
    </interactant>
    <interactant intactId="EBI-740098">
        <id>P36406</id>
        <label>TRIM23</label>
    </interactant>
    <organismsDiffer>false</organismsDiffer>
    <experiments>6</experiments>
</comment>
<comment type="interaction">
    <interactant intactId="EBI-6658203">
        <id>Q86YD7</id>
    </interactant>
    <interactant intactId="EBI-719493">
        <id>P14373</id>
        <label>TRIM27</label>
    </interactant>
    <organismsDiffer>false</organismsDiffer>
    <experiments>3</experiments>
</comment>
<comment type="interaction">
    <interactant intactId="EBI-6658203">
        <id>Q86YD7</id>
    </interactant>
    <interactant intactId="EBI-5235829">
        <id>Q8IWZ5</id>
        <label>TRIM42</label>
    </interactant>
    <organismsDiffer>false</organismsDiffer>
    <experiments>3</experiments>
</comment>
<comment type="interaction">
    <interactant intactId="EBI-6658203">
        <id>Q86YD7</id>
    </interactant>
    <interactant intactId="EBI-2130429">
        <id>Q9BYV2</id>
        <label>TRIM54</label>
    </interactant>
    <organismsDiffer>false</organismsDiffer>
    <experiments>3</experiments>
</comment>
<comment type="interaction">
    <interactant intactId="EBI-6658203">
        <id>Q86YD7</id>
    </interactant>
    <interactant intactId="EBI-11525489">
        <id>Q86WT6-2</id>
        <label>TRIM69</label>
    </interactant>
    <organismsDiffer>false</organismsDiffer>
    <experiments>3</experiments>
</comment>
<comment type="interaction">
    <interactant intactId="EBI-6658203">
        <id>Q86YD7</id>
    </interactant>
    <interactant intactId="EBI-720828">
        <id>Q9C026</id>
        <label>TRIM9</label>
    </interactant>
    <organismsDiffer>false</organismsDiffer>
    <experiments>3</experiments>
</comment>
<comment type="interaction">
    <interactant intactId="EBI-6658203">
        <id>Q86YD7</id>
    </interactant>
    <interactant intactId="EBI-11059915">
        <id>Q8N7C3</id>
        <label>TRIML2</label>
    </interactant>
    <organismsDiffer>false</organismsDiffer>
    <experiments>3</experiments>
</comment>
<comment type="interaction">
    <interactant intactId="EBI-6658203">
        <id>Q86YD7</id>
    </interactant>
    <interactant intactId="EBI-12894399">
        <id>Q9H8Y1</id>
        <label>VRTN</label>
    </interactant>
    <organismsDiffer>false</organismsDiffer>
    <experiments>3</experiments>
</comment>
<comment type="interaction">
    <interactant intactId="EBI-6658203">
        <id>Q86YD7</id>
    </interactant>
    <interactant intactId="EBI-11957238">
        <id>Q2TAL6</id>
        <label>VWC2</label>
    </interactant>
    <organismsDiffer>false</organismsDiffer>
    <experiments>3</experiments>
</comment>
<comment type="interaction">
    <interactant intactId="EBI-6658203">
        <id>Q86YD7</id>
    </interactant>
    <interactant intactId="EBI-10176632">
        <id>O43829</id>
        <label>ZBTB14</label>
    </interactant>
    <organismsDiffer>false</organismsDiffer>
    <experiments>3</experiments>
</comment>
<comment type="interaction">
    <interactant intactId="EBI-6658203">
        <id>Q86YD7</id>
    </interactant>
    <interactant intactId="EBI-711925">
        <id>Q05516</id>
        <label>ZBTB16</label>
    </interactant>
    <organismsDiffer>false</organismsDiffer>
    <experiments>3</experiments>
</comment>
<comment type="interaction">
    <interactant intactId="EBI-6658203">
        <id>Q86YD7</id>
    </interactant>
    <interactant intactId="EBI-11522250">
        <id>O15156-2</id>
        <label>ZBTB7B</label>
    </interactant>
    <organismsDiffer>false</organismsDiffer>
    <experiments>3</experiments>
</comment>
<comment type="interaction">
    <interactant intactId="EBI-6658203">
        <id>Q86YD7</id>
    </interactant>
    <interactant intactId="EBI-742740">
        <id>Q96BR9</id>
        <label>ZBTB8A</label>
    </interactant>
    <organismsDiffer>false</organismsDiffer>
    <experiments>3</experiments>
</comment>
<comment type="interaction">
    <interactant intactId="EBI-6658203">
        <id>Q86YD7</id>
    </interactant>
    <interactant intactId="EBI-14104088">
        <id>Q53FD0-2</id>
        <label>ZC2HC1C</label>
    </interactant>
    <organismsDiffer>false</organismsDiffer>
    <experiments>3</experiments>
</comment>
<comment type="interaction">
    <interactant intactId="EBI-6658203">
        <id>Q86YD7</id>
    </interactant>
    <interactant intactId="EBI-12030590">
        <id>Q9H0C1</id>
        <label>ZMYND12</label>
    </interactant>
    <organismsDiffer>false</organismsDiffer>
    <experiments>3</experiments>
</comment>
<comment type="interaction">
    <interactant intactId="EBI-6658203">
        <id>Q86YD7</id>
    </interactant>
    <interactant intactId="EBI-2849334">
        <id>P52747</id>
        <label>ZNF143</label>
    </interactant>
    <organismsDiffer>false</organismsDiffer>
    <experiments>3</experiments>
</comment>
<comment type="interaction">
    <interactant intactId="EBI-6658203">
        <id>Q86YD7</id>
    </interactant>
    <interactant intactId="EBI-1640204">
        <id>Q9UDV6</id>
        <label>ZNF212</label>
    </interactant>
    <organismsDiffer>false</organismsDiffer>
    <experiments>8</experiments>
</comment>
<comment type="interaction">
    <interactant intactId="EBI-6658203">
        <id>Q86YD7</id>
    </interactant>
    <interactant intactId="EBI-10252492">
        <id>Q6P1L6</id>
        <label>ZNF343</label>
    </interactant>
    <organismsDiffer>false</organismsDiffer>
    <experiments>3</experiments>
</comment>
<comment type="interaction">
    <interactant intactId="EBI-6658203">
        <id>Q86YD7</id>
    </interactant>
    <interactant intactId="EBI-11035148">
        <id>Q8TF50</id>
        <label>ZNF526</label>
    </interactant>
    <organismsDiffer>false</organismsDiffer>
    <experiments>3</experiments>
</comment>
<comment type="interaction">
    <interactant intactId="EBI-6658203">
        <id>Q86YD7</id>
    </interactant>
    <interactant intactId="EBI-745520">
        <id>Q9P0T4</id>
        <label>ZNF581</label>
    </interactant>
    <organismsDiffer>false</organismsDiffer>
    <experiments>3</experiments>
</comment>
<comment type="interaction">
    <interactant intactId="EBI-6658203">
        <id>Q86YD7</id>
    </interactant>
    <interactant intactId="EBI-625509">
        <id>Q8N720</id>
        <label>ZNF655</label>
    </interactant>
    <organismsDiffer>false</organismsDiffer>
    <experiments>3</experiments>
</comment>
<comment type="interaction">
    <interactant intactId="EBI-6658203">
        <id>Q86YD7</id>
    </interactant>
    <interactant intactId="EBI-4395732">
        <id>P0C7X2</id>
        <label>ZNF688</label>
    </interactant>
    <organismsDiffer>false</organismsDiffer>
    <experiments>3</experiments>
</comment>
<comment type="interaction">
    <interactant intactId="EBI-6658203">
        <id>Q86YD7</id>
    </interactant>
    <interactant intactId="EBI-7254550">
        <id>P36508</id>
        <label>ZNF76</label>
    </interactant>
    <organismsDiffer>false</organismsDiffer>
    <experiments>3</experiments>
</comment>
<comment type="interaction">
    <interactant intactId="EBI-6658203">
        <id>Q86YD7</id>
    </interactant>
    <interactant intactId="EBI-1001132">
        <id>O95229</id>
        <label>ZWINT</label>
    </interactant>
    <organismsDiffer>false</organismsDiffer>
    <experiments>3</experiments>
</comment>
<comment type="similarity">
    <text evidence="5">Belongs to the FAM90 family.</text>
</comment>
<evidence type="ECO:0000256" key="1">
    <source>
        <dbReference type="SAM" id="MobiDB-lite"/>
    </source>
</evidence>
<evidence type="ECO:0000269" key="2">
    <source>
    </source>
</evidence>
<evidence type="ECO:0000269" key="3">
    <source>
    </source>
</evidence>
<evidence type="ECO:0000269" key="4">
    <source ref="3"/>
</evidence>
<evidence type="ECO:0000305" key="5"/>
<name>F90A1_HUMAN</name>
<organism>
    <name type="scientific">Homo sapiens</name>
    <name type="common">Human</name>
    <dbReference type="NCBI Taxonomy" id="9606"/>
    <lineage>
        <taxon>Eukaryota</taxon>
        <taxon>Metazoa</taxon>
        <taxon>Chordata</taxon>
        <taxon>Craniata</taxon>
        <taxon>Vertebrata</taxon>
        <taxon>Euteleostomi</taxon>
        <taxon>Mammalia</taxon>
        <taxon>Eutheria</taxon>
        <taxon>Euarchontoglires</taxon>
        <taxon>Primates</taxon>
        <taxon>Haplorrhini</taxon>
        <taxon>Catarrhini</taxon>
        <taxon>Hominidae</taxon>
        <taxon>Homo</taxon>
    </lineage>
</organism>
<gene>
    <name type="primary">FAM90A1</name>
</gene>
<proteinExistence type="evidence at protein level"/>
<accession>Q86YD7</accession>
<accession>D3DUU9</accession>
<accession>Q9NVZ6</accession>
<dbReference type="EMBL" id="AK001270">
    <property type="protein sequence ID" value="BAA91593.1"/>
    <property type="molecule type" value="mRNA"/>
</dbReference>
<dbReference type="EMBL" id="AC092111">
    <property type="status" value="NOT_ANNOTATED_CDS"/>
    <property type="molecule type" value="Genomic_DNA"/>
</dbReference>
<dbReference type="EMBL" id="CH471116">
    <property type="protein sequence ID" value="EAW88629.1"/>
    <property type="molecule type" value="Genomic_DNA"/>
</dbReference>
<dbReference type="EMBL" id="CH471116">
    <property type="protein sequence ID" value="EAW88630.1"/>
    <property type="molecule type" value="Genomic_DNA"/>
</dbReference>
<dbReference type="EMBL" id="BC042608">
    <property type="protein sequence ID" value="AAH42608.1"/>
    <property type="molecule type" value="mRNA"/>
</dbReference>
<dbReference type="CCDS" id="CCDS31738.1"/>
<dbReference type="RefSeq" id="NP_001306911.1">
    <property type="nucleotide sequence ID" value="NM_001319982.2"/>
</dbReference>
<dbReference type="RefSeq" id="NP_060558.3">
    <property type="nucleotide sequence ID" value="NM_018088.3"/>
</dbReference>
<dbReference type="RefSeq" id="XP_011519021.1">
    <property type="nucleotide sequence ID" value="XM_011520719.2"/>
</dbReference>
<dbReference type="RefSeq" id="XP_016875036.1">
    <property type="nucleotide sequence ID" value="XM_017019547.2"/>
</dbReference>
<dbReference type="RefSeq" id="XP_024304797.1">
    <property type="nucleotide sequence ID" value="XM_024449029.2"/>
</dbReference>
<dbReference type="RefSeq" id="XP_024304798.1">
    <property type="nucleotide sequence ID" value="XM_024449030.2"/>
</dbReference>
<dbReference type="RefSeq" id="XP_047285015.1">
    <property type="nucleotide sequence ID" value="XM_047429059.1"/>
</dbReference>
<dbReference type="BioGRID" id="120442">
    <property type="interactions" value="213"/>
</dbReference>
<dbReference type="FunCoup" id="Q86YD7">
    <property type="interactions" value="50"/>
</dbReference>
<dbReference type="IntAct" id="Q86YD7">
    <property type="interactions" value="204"/>
</dbReference>
<dbReference type="MINT" id="Q86YD7"/>
<dbReference type="STRING" id="9606.ENSP00000445418"/>
<dbReference type="iPTMnet" id="Q86YD7"/>
<dbReference type="PhosphoSitePlus" id="Q86YD7"/>
<dbReference type="BioMuta" id="FAM90A1"/>
<dbReference type="DMDM" id="269849691"/>
<dbReference type="MassIVE" id="Q86YD7"/>
<dbReference type="PaxDb" id="9606-ENSP00000445418"/>
<dbReference type="Antibodypedia" id="23050">
    <property type="antibodies" value="30 antibodies from 10 providers"/>
</dbReference>
<dbReference type="DNASU" id="55138"/>
<dbReference type="Ensembl" id="ENST00000307435.10">
    <property type="protein sequence ID" value="ENSP00000307798.6"/>
    <property type="gene ID" value="ENSG00000171847.11"/>
</dbReference>
<dbReference type="Ensembl" id="ENST00000538603.6">
    <property type="protein sequence ID" value="ENSP00000445418.1"/>
    <property type="gene ID" value="ENSG00000171847.11"/>
</dbReference>
<dbReference type="GeneID" id="55138"/>
<dbReference type="KEGG" id="hsa:55138"/>
<dbReference type="MANE-Select" id="ENST00000538603.6">
    <property type="protein sequence ID" value="ENSP00000445418.1"/>
    <property type="RefSeq nucleotide sequence ID" value="NM_018088.3"/>
    <property type="RefSeq protein sequence ID" value="NP_060558.3"/>
</dbReference>
<dbReference type="UCSC" id="uc001quh.3">
    <property type="organism name" value="human"/>
</dbReference>
<dbReference type="AGR" id="HGNC:25526"/>
<dbReference type="CTD" id="55138"/>
<dbReference type="DisGeNET" id="55138"/>
<dbReference type="GeneCards" id="FAM90A1"/>
<dbReference type="HGNC" id="HGNC:25526">
    <property type="gene designation" value="FAM90A1"/>
</dbReference>
<dbReference type="HPA" id="ENSG00000171847">
    <property type="expression patterns" value="Tissue enhanced (brain)"/>
</dbReference>
<dbReference type="MIM" id="613041">
    <property type="type" value="gene"/>
</dbReference>
<dbReference type="neXtProt" id="NX_Q86YD7"/>
<dbReference type="OpenTargets" id="ENSG00000171847"/>
<dbReference type="PharmGKB" id="PA142671796"/>
<dbReference type="VEuPathDB" id="HostDB:ENSG00000171847"/>
<dbReference type="eggNOG" id="ENOG502RU1C">
    <property type="taxonomic scope" value="Eukaryota"/>
</dbReference>
<dbReference type="GeneTree" id="ENSGT00910000144208"/>
<dbReference type="HOGENOM" id="CLU_047915_0_1_1"/>
<dbReference type="InParanoid" id="Q86YD7"/>
<dbReference type="OMA" id="CWNGALV"/>
<dbReference type="OrthoDB" id="9529927at2759"/>
<dbReference type="PAN-GO" id="Q86YD7">
    <property type="GO annotations" value="0 GO annotations based on evolutionary models"/>
</dbReference>
<dbReference type="PhylomeDB" id="Q86YD7"/>
<dbReference type="TreeFam" id="TF338572"/>
<dbReference type="PathwayCommons" id="Q86YD7"/>
<dbReference type="SignaLink" id="Q86YD7"/>
<dbReference type="BioGRID-ORCS" id="55138">
    <property type="hits" value="12 hits in 1138 CRISPR screens"/>
</dbReference>
<dbReference type="ChiTaRS" id="FAM90A1">
    <property type="organism name" value="human"/>
</dbReference>
<dbReference type="GenomeRNAi" id="55138"/>
<dbReference type="Pharos" id="Q86YD7">
    <property type="development level" value="Tdark"/>
</dbReference>
<dbReference type="PRO" id="PR:Q86YD7"/>
<dbReference type="Proteomes" id="UP000005640">
    <property type="component" value="Chromosome 12"/>
</dbReference>
<dbReference type="RNAct" id="Q86YD7">
    <property type="molecule type" value="protein"/>
</dbReference>
<dbReference type="Bgee" id="ENSG00000171847">
    <property type="expression patterns" value="Expressed in male germ line stem cell (sensu Vertebrata) in testis and 97 other cell types or tissues"/>
</dbReference>
<dbReference type="ExpressionAtlas" id="Q86YD7">
    <property type="expression patterns" value="baseline and differential"/>
</dbReference>
<dbReference type="InterPro" id="IPR039213">
    <property type="entry name" value="FAM90"/>
</dbReference>
<dbReference type="InterPro" id="IPR041670">
    <property type="entry name" value="Znf-CCHC_6"/>
</dbReference>
<dbReference type="PANTHER" id="PTHR16035">
    <property type="entry name" value="PROTEIN FAM90A1"/>
    <property type="match status" value="1"/>
</dbReference>
<dbReference type="PANTHER" id="PTHR16035:SF16">
    <property type="entry name" value="PROTEIN FAM90A1-RELATED"/>
    <property type="match status" value="1"/>
</dbReference>
<dbReference type="Pfam" id="PF15288">
    <property type="entry name" value="zf-CCHC_6"/>
    <property type="match status" value="1"/>
</dbReference>
<protein>
    <recommendedName>
        <fullName>Protein FAM90A1</fullName>
    </recommendedName>
</protein>
<sequence>MMARRDPKPGAKRLVRAQTLQKQRRAPVGPRAPPPDEEDPRLKCKNCEAFGHTARSTRCPMKCWKAALVPPNFGEKEGKENLKPWKPQVEANPGPLNKDKGEKEERPRPQDPQRKALLHIFSRKPPEKPLPNQKGSTESSDYLRVASGPMPVHTTSKRPRVDPVLSDRSATEMSDRGSVLASLSPLRKASLSSSSSLGPKERQTGAAADIPQTAVRHQGPEPLLVVKPTHSSPAGGCREVPQAASKTHGLLQAVSPQAQDKRPAVTSQPCPPAATHSLGLGSNLSFGPGAKRSAPAPIQACLNFPKKPRLGPFQIPESAIQGGELGAPENLQPPPAATELGPRTSPQTGTRTPAQVLSGDRQPPHSRPCLPTAQACTMSHHPAASHDGAQPLRVLFRRLENGRWSSSLLTAPSFHSPEKPGAFLAQSPHVSEKSEGPCVRVPPSVLYEDLQVPSSSEDSDSDLE</sequence>
<feature type="chain" id="PRO_0000299592" description="Protein FAM90A1">
    <location>
        <begin position="1"/>
        <end position="464"/>
    </location>
</feature>
<feature type="region of interest" description="Disordered" evidence="1">
    <location>
        <begin position="1"/>
        <end position="43"/>
    </location>
</feature>
<feature type="region of interest" description="Disordered" evidence="1">
    <location>
        <begin position="71"/>
        <end position="294"/>
    </location>
</feature>
<feature type="region of interest" description="Disordered" evidence="1">
    <location>
        <begin position="312"/>
        <end position="386"/>
    </location>
</feature>
<feature type="region of interest" description="Disordered" evidence="1">
    <location>
        <begin position="412"/>
        <end position="437"/>
    </location>
</feature>
<feature type="region of interest" description="Disordered" evidence="1">
    <location>
        <begin position="445"/>
        <end position="464"/>
    </location>
</feature>
<feature type="compositionally biased region" description="Basic and acidic residues" evidence="1">
    <location>
        <begin position="74"/>
        <end position="83"/>
    </location>
</feature>
<feature type="compositionally biased region" description="Basic and acidic residues" evidence="1">
    <location>
        <begin position="97"/>
        <end position="114"/>
    </location>
</feature>
<feature type="compositionally biased region" description="Low complexity" evidence="1">
    <location>
        <begin position="180"/>
        <end position="197"/>
    </location>
</feature>
<feature type="compositionally biased region" description="Polar residues" evidence="1">
    <location>
        <begin position="344"/>
        <end position="355"/>
    </location>
</feature>
<feature type="sequence variant" id="VAR_060293" description="In dbSNP:rs9738115." evidence="2 3">
    <original>R</original>
    <variation>G</variation>
    <location>
        <position position="123"/>
    </location>
</feature>
<feature type="sequence variant" id="VAR_057778" description="In dbSNP:rs9668582." evidence="3">
    <original>A</original>
    <variation>E</variation>
    <location>
        <position position="234"/>
    </location>
</feature>
<feature type="sequence variant" id="VAR_060294" description="In dbSNP:rs17855656." evidence="3">
    <original>P</original>
    <variation>L</variation>
    <location>
        <position position="334"/>
    </location>
</feature>
<feature type="sequence variant" id="VAR_060154" description="In dbSNP:rs9668475.">
    <original>R</original>
    <variation>S</variation>
    <location>
        <position position="343"/>
    </location>
</feature>
<feature type="sequence variant" id="VAR_060295" description="In dbSNP:rs9668474." evidence="2 3 4">
    <original>T</original>
    <variation>I</variation>
    <location>
        <position position="348"/>
    </location>
</feature>
<feature type="sequence variant" id="VAR_060155" description="In dbSNP:rs11044098.">
    <original>T</original>
    <variation>A</variation>
    <location>
        <position position="410"/>
    </location>
</feature>
<feature type="sequence conflict" description="In Ref. 4; AAH42608." evidence="5" ref="4">
    <original>VS</original>
    <variation>AR</variation>
    <location>
        <begin position="254"/>
        <end position="255"/>
    </location>
</feature>
<feature type="sequence conflict" description="In Ref. 1; BAA91593." evidence="5" ref="1">
    <original>T</original>
    <variation>TV</variation>
    <location>
        <position position="344"/>
    </location>
</feature>